<dbReference type="EMBL" id="L42023">
    <property type="protein sequence ID" value="AAC23102.1"/>
    <property type="molecule type" value="Genomic_DNA"/>
</dbReference>
<dbReference type="PIR" id="E64030">
    <property type="entry name" value="E64030"/>
</dbReference>
<dbReference type="RefSeq" id="NP_439605.1">
    <property type="nucleotide sequence ID" value="NC_000907.1"/>
</dbReference>
<dbReference type="SMR" id="P44202"/>
<dbReference type="STRING" id="71421.HI_1454"/>
<dbReference type="EnsemblBacteria" id="AAC23102">
    <property type="protein sequence ID" value="AAC23102"/>
    <property type="gene ID" value="HI_1454"/>
</dbReference>
<dbReference type="KEGG" id="hin:HI_1454"/>
<dbReference type="PATRIC" id="fig|71421.8.peg.1515"/>
<dbReference type="eggNOG" id="COG0785">
    <property type="taxonomic scope" value="Bacteria"/>
</dbReference>
<dbReference type="HOGENOM" id="CLU_053225_2_0_6"/>
<dbReference type="OrthoDB" id="9811352at2"/>
<dbReference type="PhylomeDB" id="P44202"/>
<dbReference type="BioCyc" id="HINF71421:G1GJ1-1479-MONOMER"/>
<dbReference type="Proteomes" id="UP000000579">
    <property type="component" value="Chromosome"/>
</dbReference>
<dbReference type="GO" id="GO:0005886">
    <property type="term" value="C:plasma membrane"/>
    <property type="evidence" value="ECO:0007669"/>
    <property type="project" value="UniProtKB-SubCell"/>
</dbReference>
<dbReference type="GO" id="GO:0017004">
    <property type="term" value="P:cytochrome complex assembly"/>
    <property type="evidence" value="ECO:0007669"/>
    <property type="project" value="UniProtKB-KW"/>
</dbReference>
<dbReference type="InterPro" id="IPR003834">
    <property type="entry name" value="Cyt_c_assmbl_TM_dom"/>
</dbReference>
<dbReference type="InterPro" id="IPR051790">
    <property type="entry name" value="Cytochrome_c-biogenesis_DsbD"/>
</dbReference>
<dbReference type="PANTHER" id="PTHR31272">
    <property type="entry name" value="CYTOCHROME C-TYPE BIOGENESIS PROTEIN HI_1454-RELATED"/>
    <property type="match status" value="1"/>
</dbReference>
<dbReference type="PANTHER" id="PTHR31272:SF4">
    <property type="entry name" value="CYTOCHROME C-TYPE BIOGENESIS PROTEIN HI_1454-RELATED"/>
    <property type="match status" value="1"/>
</dbReference>
<dbReference type="Pfam" id="PF02683">
    <property type="entry name" value="DsbD_TM"/>
    <property type="match status" value="1"/>
</dbReference>
<keyword id="KW-1003">Cell membrane</keyword>
<keyword id="KW-0201">Cytochrome c-type biogenesis</keyword>
<keyword id="KW-0472">Membrane</keyword>
<keyword id="KW-1185">Reference proteome</keyword>
<keyword id="KW-0812">Transmembrane</keyword>
<keyword id="KW-1133">Transmembrane helix</keyword>
<organism>
    <name type="scientific">Haemophilus influenzae (strain ATCC 51907 / DSM 11121 / KW20 / Rd)</name>
    <dbReference type="NCBI Taxonomy" id="71421"/>
    <lineage>
        <taxon>Bacteria</taxon>
        <taxon>Pseudomonadati</taxon>
        <taxon>Pseudomonadota</taxon>
        <taxon>Gammaproteobacteria</taxon>
        <taxon>Pasteurellales</taxon>
        <taxon>Pasteurellaceae</taxon>
        <taxon>Haemophilus</taxon>
    </lineage>
</organism>
<feature type="chain" id="PRO_0000201625" description="Putative cytochrome c-type biogenesis protein HI_1454">
    <location>
        <begin position="1"/>
        <end position="213"/>
    </location>
</feature>
<feature type="transmembrane region" description="Helical" evidence="2">
    <location>
        <begin position="15"/>
        <end position="35"/>
    </location>
</feature>
<feature type="transmembrane region" description="Helical" evidence="2">
    <location>
        <begin position="46"/>
        <end position="66"/>
    </location>
</feature>
<feature type="transmembrane region" description="Helical" evidence="2">
    <location>
        <begin position="77"/>
        <end position="97"/>
    </location>
</feature>
<feature type="transmembrane region" description="Helical" evidence="2">
    <location>
        <begin position="118"/>
        <end position="138"/>
    </location>
</feature>
<feature type="transmembrane region" description="Helical" evidence="2">
    <location>
        <begin position="154"/>
        <end position="174"/>
    </location>
</feature>
<feature type="transmembrane region" description="Helical" evidence="2">
    <location>
        <begin position="192"/>
        <end position="212"/>
    </location>
</feature>
<sequence length="213" mass="22789">MLDQQLLIGTVFLAGLASFLSPCIFPIIPIYFGILSKGGKKVLNTFLFILGLSLTFVSLGFSFGFLGNILFSNTTRIIAGVIVIILGIHQLGIFKIGLLERTKLVEIKTSGKSTALEAFVLGLTFSLGWTPCIGPILASVLALSGDEGSALYGASMMFVYVLGLATPFVLFSFFSDSLLKRAKGLNKHLDKFKIGGGILIIVMGILLITNNFS</sequence>
<gene>
    <name type="ordered locus">HI_1454</name>
</gene>
<name>Y1454_HAEIN</name>
<reference key="1">
    <citation type="journal article" date="1995" name="Science">
        <title>Whole-genome random sequencing and assembly of Haemophilus influenzae Rd.</title>
        <authorList>
            <person name="Fleischmann R.D."/>
            <person name="Adams M.D."/>
            <person name="White O."/>
            <person name="Clayton R.A."/>
            <person name="Kirkness E.F."/>
            <person name="Kerlavage A.R."/>
            <person name="Bult C.J."/>
            <person name="Tomb J.-F."/>
            <person name="Dougherty B.A."/>
            <person name="Merrick J.M."/>
            <person name="McKenney K."/>
            <person name="Sutton G.G."/>
            <person name="FitzHugh W."/>
            <person name="Fields C.A."/>
            <person name="Gocayne J.D."/>
            <person name="Scott J.D."/>
            <person name="Shirley R."/>
            <person name="Liu L.-I."/>
            <person name="Glodek A."/>
            <person name="Kelley J.M."/>
            <person name="Weidman J.F."/>
            <person name="Phillips C.A."/>
            <person name="Spriggs T."/>
            <person name="Hedblom E."/>
            <person name="Cotton M.D."/>
            <person name="Utterback T.R."/>
            <person name="Hanna M.C."/>
            <person name="Nguyen D.T."/>
            <person name="Saudek D.M."/>
            <person name="Brandon R.C."/>
            <person name="Fine L.D."/>
            <person name="Fritchman J.L."/>
            <person name="Fuhrmann J.L."/>
            <person name="Geoghagen N.S.M."/>
            <person name="Gnehm C.L."/>
            <person name="McDonald L.A."/>
            <person name="Small K.V."/>
            <person name="Fraser C.M."/>
            <person name="Smith H.O."/>
            <person name="Venter J.C."/>
        </authorList>
    </citation>
    <scope>NUCLEOTIDE SEQUENCE [LARGE SCALE GENOMIC DNA]</scope>
    <source>
        <strain>ATCC 51907 / DSM 11121 / KW20 / Rd</strain>
    </source>
</reference>
<evidence type="ECO:0000250" key="1"/>
<evidence type="ECO:0000255" key="2"/>
<evidence type="ECO:0000305" key="3"/>
<proteinExistence type="inferred from homology"/>
<comment type="function">
    <text evidence="1">Could be involved in cytochrome c synthesis.</text>
</comment>
<comment type="subcellular location">
    <subcellularLocation>
        <location evidence="3">Cell membrane</location>
        <topology evidence="3">Multi-pass membrane protein</topology>
    </subcellularLocation>
</comment>
<comment type="similarity">
    <text evidence="3">Belongs to the DsbD family.</text>
</comment>
<accession>P44202</accession>
<protein>
    <recommendedName>
        <fullName>Putative cytochrome c-type biogenesis protein HI_1454</fullName>
    </recommendedName>
</protein>